<organism>
    <name type="scientific">Escherichia coli O1:K1 / APEC</name>
    <dbReference type="NCBI Taxonomy" id="405955"/>
    <lineage>
        <taxon>Bacteria</taxon>
        <taxon>Pseudomonadati</taxon>
        <taxon>Pseudomonadota</taxon>
        <taxon>Gammaproteobacteria</taxon>
        <taxon>Enterobacterales</taxon>
        <taxon>Enterobacteriaceae</taxon>
        <taxon>Escherichia</taxon>
    </lineage>
</organism>
<evidence type="ECO:0000250" key="1"/>
<evidence type="ECO:0000255" key="2">
    <source>
        <dbReference type="PROSITE-ProRule" id="PRU00253"/>
    </source>
</evidence>
<evidence type="ECO:0000305" key="3"/>
<feature type="chain" id="PRO_0000312807" description="HTH-type transcriptional activator AllS">
    <location>
        <begin position="1"/>
        <end position="308"/>
    </location>
</feature>
<feature type="domain" description="HTH lysR-type" evidence="2">
    <location>
        <begin position="2"/>
        <end position="59"/>
    </location>
</feature>
<feature type="DNA-binding region" description="H-T-H motif" evidence="2">
    <location>
        <begin position="19"/>
        <end position="38"/>
    </location>
</feature>
<comment type="function">
    <text evidence="1">Positive regulator essential for the expression of allD operon. Binds to the allD promoter (By similarity).</text>
</comment>
<comment type="similarity">
    <text evidence="3">Belongs to the LysR transcriptional regulatory family.</text>
</comment>
<sequence length="308" mass="34526">MFDPETLRTFIAVAETGSFSKAAERLCKTTATISYRIKLLEENTGVALFFRTTRSVTLTAAGEHLLCQARDWLGWLESMPSELQQVNDGVERQVNIVINNLLYNPQAVARLLAWLNERYPFTQFHISRQIYMGVWDSLLYEGFSLAIGVTGTEALANTFSLDPLGSVQWRFVMAADHPLANVEEPLTEAQLRRFPAVNIEDSARTLTKRVAWRLPGQKEIIVPDMETKIAAHLAGVGIGFLPKSLCQSMLDNQQLVSRVIPTMRPPSPLSLAWRKFGSGKAVEDIVTLFTQRRPEISGFLEIFGNPRS</sequence>
<protein>
    <recommendedName>
        <fullName>HTH-type transcriptional activator AllS</fullName>
    </recommendedName>
</protein>
<dbReference type="EMBL" id="CP000468">
    <property type="protein sequence ID" value="ABI99959.1"/>
    <property type="molecule type" value="Genomic_DNA"/>
</dbReference>
<dbReference type="RefSeq" id="WP_000460112.1">
    <property type="nucleotide sequence ID" value="NZ_CADILS010000009.1"/>
</dbReference>
<dbReference type="SMR" id="A1A8H0"/>
<dbReference type="KEGG" id="ecv:APECO1_1510"/>
<dbReference type="HOGENOM" id="CLU_039613_35_1_6"/>
<dbReference type="Proteomes" id="UP000008216">
    <property type="component" value="Chromosome"/>
</dbReference>
<dbReference type="GO" id="GO:0003677">
    <property type="term" value="F:DNA binding"/>
    <property type="evidence" value="ECO:0007669"/>
    <property type="project" value="UniProtKB-KW"/>
</dbReference>
<dbReference type="GO" id="GO:0003700">
    <property type="term" value="F:DNA-binding transcription factor activity"/>
    <property type="evidence" value="ECO:0007669"/>
    <property type="project" value="InterPro"/>
</dbReference>
<dbReference type="FunFam" id="3.40.190.290:FF:000005">
    <property type="entry name" value="HTH-type transcriptional activator AllS"/>
    <property type="match status" value="1"/>
</dbReference>
<dbReference type="FunFam" id="1.10.10.10:FF:000001">
    <property type="entry name" value="LysR family transcriptional regulator"/>
    <property type="match status" value="1"/>
</dbReference>
<dbReference type="Gene3D" id="3.40.190.290">
    <property type="match status" value="1"/>
</dbReference>
<dbReference type="Gene3D" id="1.10.10.10">
    <property type="entry name" value="Winged helix-like DNA-binding domain superfamily/Winged helix DNA-binding domain"/>
    <property type="match status" value="1"/>
</dbReference>
<dbReference type="InterPro" id="IPR050176">
    <property type="entry name" value="LTTR"/>
</dbReference>
<dbReference type="InterPro" id="IPR005119">
    <property type="entry name" value="LysR_subst-bd"/>
</dbReference>
<dbReference type="InterPro" id="IPR000847">
    <property type="entry name" value="Tscrpt_reg_HTH_LysR"/>
</dbReference>
<dbReference type="InterPro" id="IPR036388">
    <property type="entry name" value="WH-like_DNA-bd_sf"/>
</dbReference>
<dbReference type="InterPro" id="IPR036390">
    <property type="entry name" value="WH_DNA-bd_sf"/>
</dbReference>
<dbReference type="NCBIfam" id="NF007501">
    <property type="entry name" value="PRK10094.1"/>
    <property type="match status" value="1"/>
</dbReference>
<dbReference type="PANTHER" id="PTHR30579:SF0">
    <property type="entry name" value="HTH-TYPE TRANSCRIPTIONAL ACTIVATOR ALLS"/>
    <property type="match status" value="1"/>
</dbReference>
<dbReference type="PANTHER" id="PTHR30579">
    <property type="entry name" value="TRANSCRIPTIONAL REGULATOR"/>
    <property type="match status" value="1"/>
</dbReference>
<dbReference type="Pfam" id="PF00126">
    <property type="entry name" value="HTH_1"/>
    <property type="match status" value="1"/>
</dbReference>
<dbReference type="Pfam" id="PF03466">
    <property type="entry name" value="LysR_substrate"/>
    <property type="match status" value="1"/>
</dbReference>
<dbReference type="SUPFAM" id="SSF53850">
    <property type="entry name" value="Periplasmic binding protein-like II"/>
    <property type="match status" value="1"/>
</dbReference>
<dbReference type="SUPFAM" id="SSF46785">
    <property type="entry name" value="Winged helix' DNA-binding domain"/>
    <property type="match status" value="1"/>
</dbReference>
<dbReference type="PROSITE" id="PS50931">
    <property type="entry name" value="HTH_LYSR"/>
    <property type="match status" value="1"/>
</dbReference>
<name>ALLS_ECOK1</name>
<proteinExistence type="inferred from homology"/>
<keyword id="KW-0010">Activator</keyword>
<keyword id="KW-0238">DNA-binding</keyword>
<keyword id="KW-1185">Reference proteome</keyword>
<keyword id="KW-0804">Transcription</keyword>
<keyword id="KW-0805">Transcription regulation</keyword>
<accession>A1A8H0</accession>
<gene>
    <name type="primary">allS</name>
    <name type="ordered locus">Ecok1_04660</name>
    <name type="ORF">APECO1_1510</name>
</gene>
<reference key="1">
    <citation type="journal article" date="2007" name="J. Bacteriol.">
        <title>The genome sequence of avian pathogenic Escherichia coli strain O1:K1:H7 shares strong similarities with human extraintestinal pathogenic E. coli genomes.</title>
        <authorList>
            <person name="Johnson T.J."/>
            <person name="Kariyawasam S."/>
            <person name="Wannemuehler Y."/>
            <person name="Mangiamele P."/>
            <person name="Johnson S.J."/>
            <person name="Doetkott C."/>
            <person name="Skyberg J.A."/>
            <person name="Lynne A.M."/>
            <person name="Johnson J.R."/>
            <person name="Nolan L.K."/>
        </authorList>
    </citation>
    <scope>NUCLEOTIDE SEQUENCE [LARGE SCALE GENOMIC DNA]</scope>
</reference>